<feature type="chain" id="PRO_0000311645" description="Protein PB1-F2">
    <location>
        <begin position="1"/>
        <end position="90"/>
    </location>
</feature>
<feature type="region of interest" description="Disordered" evidence="2">
    <location>
        <begin position="1"/>
        <end position="34"/>
    </location>
</feature>
<feature type="region of interest" description="Mitochondrial targeting sequence" evidence="1">
    <location>
        <begin position="65"/>
        <end position="87"/>
    </location>
</feature>
<feature type="compositionally biased region" description="Polar residues" evidence="2">
    <location>
        <begin position="1"/>
        <end position="28"/>
    </location>
</feature>
<feature type="site" description="Low pathogenicity" evidence="1">
    <location>
        <position position="66"/>
    </location>
</feature>
<keyword id="KW-0053">Apoptosis</keyword>
<keyword id="KW-1035">Host cytoplasm</keyword>
<keyword id="KW-1043">Host membrane</keyword>
<keyword id="KW-1045">Host mitochondrion</keyword>
<keyword id="KW-1046">Host mitochondrion inner membrane</keyword>
<keyword id="KW-1048">Host nucleus</keyword>
<keyword id="KW-0945">Host-virus interaction</keyword>
<keyword id="KW-1090">Inhibition of host innate immune response by virus</keyword>
<keyword id="KW-1097">Inhibition of host MAVS by virus</keyword>
<keyword id="KW-1113">Inhibition of host RLR pathway by virus</keyword>
<keyword id="KW-0472">Membrane</keyword>
<keyword id="KW-1119">Modulation of host cell apoptosis by virus</keyword>
<keyword id="KW-0899">Viral immunoevasion</keyword>
<organism>
    <name type="scientific">Influenza A virus (strain A/Chicken/Hong Kong/96.1/2002 H5N1 genotype Y)</name>
    <dbReference type="NCBI Taxonomy" id="279803"/>
    <lineage>
        <taxon>Viruses</taxon>
        <taxon>Riboviria</taxon>
        <taxon>Orthornavirae</taxon>
        <taxon>Negarnaviricota</taxon>
        <taxon>Polyploviricotina</taxon>
        <taxon>Insthoviricetes</taxon>
        <taxon>Articulavirales</taxon>
        <taxon>Orthomyxoviridae</taxon>
        <taxon>Alphainfluenzavirus</taxon>
        <taxon>Alphainfluenzavirus influenzae</taxon>
        <taxon>Influenza A virus</taxon>
    </lineage>
</organism>
<comment type="function">
    <text evidence="1">Plays an important role in promoting lung pathology in both primary viral infection and secondary bacterial infection. Promotes alteration of mitochondrial morphology, dissipation of mitochondrial membrane potential, and cell death. Alternatively, inhibits the production of interferon in the infected cell at the level of host mitochondrial antiviral signaling MAVS. Its level of expression differs greatly depending on which cell type is infected, in a manner that is independent of the levels of expression of other viral proteins. Monocytic cells are more affected than epithelial cells. Seems to disable virus-infected monocytes or other host innate immune cells. During early stage of infection, predisposes the mitochondria to permeability transition through interaction with host SLC25A6/ANT3 and VDAC1. These proteins participate in the formation of the permeability transition pore complex (PTPC) responsible of the release of mitochondrial products that triggers apoptosis.</text>
</comment>
<comment type="subunit">
    <text evidence="1">Oligomer. Interacts with human SLC25A6/ANT3 and VDAC1. Interacts with host MAVS.</text>
</comment>
<comment type="subcellular location">
    <subcellularLocation>
        <location evidence="1">Host mitochondrion inner membrane</location>
    </subcellularLocation>
    <subcellularLocation>
        <location evidence="1">Host nucleus</location>
    </subcellularLocation>
    <subcellularLocation>
        <location evidence="1">Host cytoplasm</location>
        <location evidence="1">Host cytosol</location>
    </subcellularLocation>
    <text evidence="1">Inner mitochondrial membrane in most cells types. Otherwise is detected in the nucleus and cytosol.</text>
</comment>
<comment type="miscellaneous">
    <text>Is not encoded in all strains, and seems to be dispensable for replication.</text>
</comment>
<comment type="similarity">
    <text evidence="1">Belongs to the influenza viruses PB1-F2 family.</text>
</comment>
<reference key="1">
    <citation type="journal article" date="2004" name="Proc. Natl. Acad. Sci. U.S.A.">
        <title>H5N1 influenza: a protean pandemic threat.</title>
        <authorList>
            <person name="Guan Y."/>
            <person name="Poon L.L.M."/>
            <person name="Cheung C.Y."/>
            <person name="Ellis T.M."/>
            <person name="Lim W."/>
            <person name="Lipatov A.S."/>
            <person name="Chan K.H."/>
            <person name="Sturm-Ramirez K.M."/>
            <person name="Cheung C.L."/>
            <person name="Leung Y.H.C."/>
            <person name="Yuen K.Y."/>
            <person name="Webster R.G."/>
            <person name="Peiris J.S.M."/>
        </authorList>
    </citation>
    <scope>NUCLEOTIDE SEQUENCE [GENOMIC RNA]</scope>
</reference>
<proteinExistence type="inferred from homology"/>
<gene>
    <name evidence="1" type="primary">PB1</name>
</gene>
<protein>
    <recommendedName>
        <fullName evidence="1">Protein PB1-F2</fullName>
    </recommendedName>
</protein>
<accession>P0C5V4</accession>
<sequence>MEQGQDTPWTQSTEHTNIQKRGSGQQTQRLEHPNSTRLMDHYLRIMSPVGMHKQIVYWKQWLSLKNPTQGSLKTRVLKRWKLFNKQEWIN</sequence>
<evidence type="ECO:0000255" key="1">
    <source>
        <dbReference type="HAMAP-Rule" id="MF_04064"/>
    </source>
</evidence>
<evidence type="ECO:0000256" key="2">
    <source>
        <dbReference type="SAM" id="MobiDB-lite"/>
    </source>
</evidence>
<dbReference type="EMBL" id="AY576401">
    <property type="status" value="NOT_ANNOTATED_CDS"/>
    <property type="molecule type" value="Genomic_DNA"/>
</dbReference>
<dbReference type="SMR" id="P0C5V4"/>
<dbReference type="GO" id="GO:0044164">
    <property type="term" value="C:host cell cytosol"/>
    <property type="evidence" value="ECO:0007669"/>
    <property type="project" value="UniProtKB-SubCell"/>
</dbReference>
<dbReference type="GO" id="GO:0044192">
    <property type="term" value="C:host cell mitochondrial inner membrane"/>
    <property type="evidence" value="ECO:0007669"/>
    <property type="project" value="UniProtKB-SubCell"/>
</dbReference>
<dbReference type="GO" id="GO:0042025">
    <property type="term" value="C:host cell nucleus"/>
    <property type="evidence" value="ECO:0007669"/>
    <property type="project" value="UniProtKB-SubCell"/>
</dbReference>
<dbReference type="GO" id="GO:0016020">
    <property type="term" value="C:membrane"/>
    <property type="evidence" value="ECO:0007669"/>
    <property type="project" value="UniProtKB-UniRule"/>
</dbReference>
<dbReference type="GO" id="GO:0052150">
    <property type="term" value="P:symbiont-mediated perturbation of host apoptosis"/>
    <property type="evidence" value="ECO:0007669"/>
    <property type="project" value="UniProtKB-KW"/>
</dbReference>
<dbReference type="GO" id="GO:0039545">
    <property type="term" value="P:symbiont-mediated suppression of host cytoplasmic pattern recognition receptor signaling pathway via inhibition of MAVS activity"/>
    <property type="evidence" value="ECO:0007669"/>
    <property type="project" value="UniProtKB-KW"/>
</dbReference>
<dbReference type="HAMAP" id="MF_04064">
    <property type="entry name" value="INFV_PB1F2"/>
    <property type="match status" value="1"/>
</dbReference>
<dbReference type="InterPro" id="IPR021045">
    <property type="entry name" value="Flu_proapoptotic_PB1-F2"/>
</dbReference>
<dbReference type="Pfam" id="PF11986">
    <property type="entry name" value="PB1-F2"/>
    <property type="match status" value="1"/>
</dbReference>
<name>PB1F2_I02A5</name>
<organismHost>
    <name type="scientific">Aves</name>
    <dbReference type="NCBI Taxonomy" id="8782"/>
</organismHost>
<organismHost>
    <name type="scientific">Felis catus</name>
    <name type="common">Cat</name>
    <name type="synonym">Felis silvestris catus</name>
    <dbReference type="NCBI Taxonomy" id="9685"/>
</organismHost>
<organismHost>
    <name type="scientific">Homo sapiens</name>
    <name type="common">Human</name>
    <dbReference type="NCBI Taxonomy" id="9606"/>
</organismHost>
<organismHost>
    <name type="scientific">Panthera pardus</name>
    <name type="common">Leopard</name>
    <name type="synonym">Felis pardus</name>
    <dbReference type="NCBI Taxonomy" id="9691"/>
</organismHost>
<organismHost>
    <name type="scientific">Panthera tigris</name>
    <name type="common">Tiger</name>
    <dbReference type="NCBI Taxonomy" id="9694"/>
</organismHost>
<organismHost>
    <name type="scientific">Sus scrofa</name>
    <name type="common">Pig</name>
    <dbReference type="NCBI Taxonomy" id="9823"/>
</organismHost>